<sequence>MNNKIALYCRSGFEKECAAEITEKAAQLEIFGFARVKENSGYVLFECYQLEDADRLIREIPFREFIFARQMMVVGELLKDLPPEDRVSPIVGMLVGVIEKAGELRVEVADTNESKELLKFCRKLTVPLRSALREQKILSARENAHRPVVHVFFIAPGCCYVGYSYSNNNSPFYMGIPRLKFPSDAPSRSTLKLEEAFHVFIPADEWEERLASGMHAVDLGACPGGWTYQLVQRSMMIQAVDNGLMAQSLMDTGQVTHHRADGFKYEPTRSNIYWLVCDMVEKPTKVTQLITKWLVNGWCREAIFNLKLPMKKRYEEVVQNLAMMDEQLKENGINADIHAKQLYHDREEVTVHVRRIWSGAPGRRDERY</sequence>
<protein>
    <recommendedName>
        <fullName evidence="1">Ribosomal RNA large subunit methyltransferase M</fullName>
        <ecNumber evidence="1">2.1.1.186</ecNumber>
    </recommendedName>
    <alternativeName>
        <fullName evidence="1">23S rRNA (cytidine2498-2'-O)-methyltransferase</fullName>
    </alternativeName>
    <alternativeName>
        <fullName evidence="1">23S rRNA 2'-O-ribose methyltransferase RlmM</fullName>
    </alternativeName>
</protein>
<name>RLMM_YERPP</name>
<gene>
    <name evidence="1" type="primary">rlmM</name>
    <name type="ordered locus">YPDSF_1682</name>
</gene>
<accession>A4TLA5</accession>
<dbReference type="EC" id="2.1.1.186" evidence="1"/>
<dbReference type="EMBL" id="CP000668">
    <property type="protein sequence ID" value="ABP40067.1"/>
    <property type="molecule type" value="Genomic_DNA"/>
</dbReference>
<dbReference type="RefSeq" id="WP_002212119.1">
    <property type="nucleotide sequence ID" value="NZ_CP009715.1"/>
</dbReference>
<dbReference type="SMR" id="A4TLA5"/>
<dbReference type="GeneID" id="57977530"/>
<dbReference type="KEGG" id="ypp:YPDSF_1682"/>
<dbReference type="PATRIC" id="fig|386656.14.peg.2081"/>
<dbReference type="GO" id="GO:0005737">
    <property type="term" value="C:cytoplasm"/>
    <property type="evidence" value="ECO:0007669"/>
    <property type="project" value="UniProtKB-SubCell"/>
</dbReference>
<dbReference type="GO" id="GO:0008757">
    <property type="term" value="F:S-adenosylmethionine-dependent methyltransferase activity"/>
    <property type="evidence" value="ECO:0007669"/>
    <property type="project" value="UniProtKB-UniRule"/>
</dbReference>
<dbReference type="GO" id="GO:0032259">
    <property type="term" value="P:methylation"/>
    <property type="evidence" value="ECO:0007669"/>
    <property type="project" value="UniProtKB-KW"/>
</dbReference>
<dbReference type="GO" id="GO:0006364">
    <property type="term" value="P:rRNA processing"/>
    <property type="evidence" value="ECO:0007669"/>
    <property type="project" value="UniProtKB-UniRule"/>
</dbReference>
<dbReference type="Gene3D" id="3.30.2300.20">
    <property type="match status" value="1"/>
</dbReference>
<dbReference type="Gene3D" id="3.30.70.2810">
    <property type="match status" value="1"/>
</dbReference>
<dbReference type="Gene3D" id="3.40.50.150">
    <property type="entry name" value="Vaccinia Virus protein VP39"/>
    <property type="match status" value="1"/>
</dbReference>
<dbReference type="HAMAP" id="MF_01551">
    <property type="entry name" value="23SrRNA_methyltr_M"/>
    <property type="match status" value="1"/>
</dbReference>
<dbReference type="InterPro" id="IPR040739">
    <property type="entry name" value="RlmM_FDX"/>
</dbReference>
<dbReference type="InterPro" id="IPR048646">
    <property type="entry name" value="RlmM_THUMP-like"/>
</dbReference>
<dbReference type="InterPro" id="IPR002877">
    <property type="entry name" value="RNA_MeTrfase_FtsJ_dom"/>
</dbReference>
<dbReference type="InterPro" id="IPR011224">
    <property type="entry name" value="rRNA_MeTrfase_M"/>
</dbReference>
<dbReference type="InterPro" id="IPR029063">
    <property type="entry name" value="SAM-dependent_MTases_sf"/>
</dbReference>
<dbReference type="NCBIfam" id="NF008734">
    <property type="entry name" value="PRK11760.1"/>
    <property type="match status" value="1"/>
</dbReference>
<dbReference type="PANTHER" id="PTHR37524">
    <property type="entry name" value="RIBOSOMAL RNA LARGE SUBUNIT METHYLTRANSFERASE M"/>
    <property type="match status" value="1"/>
</dbReference>
<dbReference type="PANTHER" id="PTHR37524:SF2">
    <property type="entry name" value="RIBOSOMAL RNA METHYLTRANSFERASE FTSJ DOMAIN-CONTAINING PROTEIN"/>
    <property type="match status" value="1"/>
</dbReference>
<dbReference type="Pfam" id="PF01728">
    <property type="entry name" value="FtsJ"/>
    <property type="match status" value="1"/>
</dbReference>
<dbReference type="Pfam" id="PF18125">
    <property type="entry name" value="RlmM_FDX"/>
    <property type="match status" value="1"/>
</dbReference>
<dbReference type="Pfam" id="PF21239">
    <property type="entry name" value="RLMM_N"/>
    <property type="match status" value="1"/>
</dbReference>
<dbReference type="PIRSF" id="PIRSF028774">
    <property type="entry name" value="UCP028774"/>
    <property type="match status" value="1"/>
</dbReference>
<dbReference type="SUPFAM" id="SSF53335">
    <property type="entry name" value="S-adenosyl-L-methionine-dependent methyltransferases"/>
    <property type="match status" value="1"/>
</dbReference>
<reference key="1">
    <citation type="submission" date="2007-02" db="EMBL/GenBank/DDBJ databases">
        <title>Complete sequence of chromosome of Yersinia pestis Pestoides F.</title>
        <authorList>
            <consortium name="US DOE Joint Genome Institute"/>
            <person name="Copeland A."/>
            <person name="Lucas S."/>
            <person name="Lapidus A."/>
            <person name="Barry K."/>
            <person name="Detter J.C."/>
            <person name="Glavina del Rio T."/>
            <person name="Hammon N."/>
            <person name="Israni S."/>
            <person name="Dalin E."/>
            <person name="Tice H."/>
            <person name="Pitluck S."/>
            <person name="Di Bartolo G."/>
            <person name="Chain P."/>
            <person name="Malfatti S."/>
            <person name="Shin M."/>
            <person name="Vergez L."/>
            <person name="Schmutz J."/>
            <person name="Larimer F."/>
            <person name="Land M."/>
            <person name="Hauser L."/>
            <person name="Worsham P."/>
            <person name="Chu M."/>
            <person name="Bearden S."/>
            <person name="Garcia E."/>
            <person name="Richardson P."/>
        </authorList>
    </citation>
    <scope>NUCLEOTIDE SEQUENCE [LARGE SCALE GENOMIC DNA]</scope>
    <source>
        <strain>Pestoides F</strain>
    </source>
</reference>
<organism>
    <name type="scientific">Yersinia pestis (strain Pestoides F)</name>
    <dbReference type="NCBI Taxonomy" id="386656"/>
    <lineage>
        <taxon>Bacteria</taxon>
        <taxon>Pseudomonadati</taxon>
        <taxon>Pseudomonadota</taxon>
        <taxon>Gammaproteobacteria</taxon>
        <taxon>Enterobacterales</taxon>
        <taxon>Yersiniaceae</taxon>
        <taxon>Yersinia</taxon>
    </lineage>
</organism>
<evidence type="ECO:0000255" key="1">
    <source>
        <dbReference type="HAMAP-Rule" id="MF_01551"/>
    </source>
</evidence>
<proteinExistence type="inferred from homology"/>
<comment type="function">
    <text evidence="1">Catalyzes the 2'-O-methylation at nucleotide C2498 in 23S rRNA.</text>
</comment>
<comment type="catalytic activity">
    <reaction evidence="1">
        <text>cytidine(2498) in 23S rRNA + S-adenosyl-L-methionine = 2'-O-methylcytidine(2498) in 23S rRNA + S-adenosyl-L-homocysteine + H(+)</text>
        <dbReference type="Rhea" id="RHEA:42788"/>
        <dbReference type="Rhea" id="RHEA-COMP:10244"/>
        <dbReference type="Rhea" id="RHEA-COMP:10245"/>
        <dbReference type="ChEBI" id="CHEBI:15378"/>
        <dbReference type="ChEBI" id="CHEBI:57856"/>
        <dbReference type="ChEBI" id="CHEBI:59789"/>
        <dbReference type="ChEBI" id="CHEBI:74495"/>
        <dbReference type="ChEBI" id="CHEBI:82748"/>
        <dbReference type="EC" id="2.1.1.186"/>
    </reaction>
</comment>
<comment type="subunit">
    <text evidence="1">Monomer.</text>
</comment>
<comment type="subcellular location">
    <subcellularLocation>
        <location evidence="1">Cytoplasm</location>
    </subcellularLocation>
</comment>
<comment type="similarity">
    <text evidence="1">Belongs to the class I-like SAM-binding methyltransferase superfamily. RNA methyltransferase RlmE family. RlmM subfamily.</text>
</comment>
<keyword id="KW-0963">Cytoplasm</keyword>
<keyword id="KW-0489">Methyltransferase</keyword>
<keyword id="KW-0698">rRNA processing</keyword>
<keyword id="KW-0949">S-adenosyl-L-methionine</keyword>
<keyword id="KW-0808">Transferase</keyword>
<feature type="chain" id="PRO_0000314554" description="Ribosomal RNA large subunit methyltransferase M">
    <location>
        <begin position="1"/>
        <end position="368"/>
    </location>
</feature>
<feature type="active site" description="Proton acceptor" evidence="1">
    <location>
        <position position="307"/>
    </location>
</feature>
<feature type="binding site" evidence="1">
    <location>
        <position position="189"/>
    </location>
    <ligand>
        <name>S-adenosyl-L-methionine</name>
        <dbReference type="ChEBI" id="CHEBI:59789"/>
    </ligand>
</feature>
<feature type="binding site" evidence="1">
    <location>
        <begin position="222"/>
        <end position="225"/>
    </location>
    <ligand>
        <name>S-adenosyl-L-methionine</name>
        <dbReference type="ChEBI" id="CHEBI:59789"/>
    </ligand>
</feature>
<feature type="binding site" evidence="1">
    <location>
        <position position="241"/>
    </location>
    <ligand>
        <name>S-adenosyl-L-methionine</name>
        <dbReference type="ChEBI" id="CHEBI:59789"/>
    </ligand>
</feature>
<feature type="binding site" evidence="1">
    <location>
        <position position="261"/>
    </location>
    <ligand>
        <name>S-adenosyl-L-methionine</name>
        <dbReference type="ChEBI" id="CHEBI:59789"/>
    </ligand>
</feature>
<feature type="binding site" evidence="1">
    <location>
        <position position="278"/>
    </location>
    <ligand>
        <name>S-adenosyl-L-methionine</name>
        <dbReference type="ChEBI" id="CHEBI:59789"/>
    </ligand>
</feature>